<protein>
    <recommendedName>
        <fullName evidence="1">Elongation factor P</fullName>
        <shortName evidence="1">EF-P</shortName>
    </recommendedName>
</protein>
<organism>
    <name type="scientific">Neisseria gonorrhoeae (strain NCCP11945)</name>
    <dbReference type="NCBI Taxonomy" id="521006"/>
    <lineage>
        <taxon>Bacteria</taxon>
        <taxon>Pseudomonadati</taxon>
        <taxon>Pseudomonadota</taxon>
        <taxon>Betaproteobacteria</taxon>
        <taxon>Neisseriales</taxon>
        <taxon>Neisseriaceae</taxon>
        <taxon>Neisseria</taxon>
    </lineage>
</organism>
<sequence length="186" mass="20866">MKTAQELRAGNVFMVGNDPMVVQKTEYIKGGRSSAKVSMKLKNLLTGAASETIYKADDKFDVVILSRKNCTYSYFADPMYVFMDEEFNQYEIEADNIGDALKFIVDGMEDQCEVTFYEGNPISVELPTIIVREVDYTEPAVKGDTSGKVMKTARLVGGTEIQVMSYIENGDKVEIDTRTGEFRKRA</sequence>
<comment type="function">
    <text evidence="1">Involved in peptide bond synthesis. Stimulates efficient translation and peptide-bond synthesis on native or reconstituted 70S ribosomes in vitro. Probably functions indirectly by altering the affinity of the ribosome for aminoacyl-tRNA, thus increasing their reactivity as acceptors for peptidyl transferase.</text>
</comment>
<comment type="pathway">
    <text evidence="1">Protein biosynthesis; polypeptide chain elongation.</text>
</comment>
<comment type="subcellular location">
    <subcellularLocation>
        <location evidence="1">Cytoplasm</location>
    </subcellularLocation>
</comment>
<comment type="similarity">
    <text evidence="1">Belongs to the elongation factor P family.</text>
</comment>
<reference key="1">
    <citation type="journal article" date="2008" name="J. Bacteriol.">
        <title>Complete genome sequence of Neisseria gonorrhoeae NCCP11945.</title>
        <authorList>
            <person name="Chung G.T."/>
            <person name="Yoo J.S."/>
            <person name="Oh H.B."/>
            <person name="Lee Y.S."/>
            <person name="Cha S.H."/>
            <person name="Kim S.J."/>
            <person name="Yoo C.K."/>
        </authorList>
    </citation>
    <scope>NUCLEOTIDE SEQUENCE [LARGE SCALE GENOMIC DNA]</scope>
    <source>
        <strain>NCCP11945</strain>
    </source>
</reference>
<dbReference type="EMBL" id="CP001050">
    <property type="protein sequence ID" value="ACF29541.1"/>
    <property type="molecule type" value="Genomic_DNA"/>
</dbReference>
<dbReference type="RefSeq" id="WP_003688368.1">
    <property type="nucleotide sequence ID" value="NC_011035.1"/>
</dbReference>
<dbReference type="SMR" id="B4RL51"/>
<dbReference type="KEGG" id="ngk:NGK_0861"/>
<dbReference type="HOGENOM" id="CLU_074944_2_1_4"/>
<dbReference type="UniPathway" id="UPA00345"/>
<dbReference type="Proteomes" id="UP000002564">
    <property type="component" value="Chromosome"/>
</dbReference>
<dbReference type="GO" id="GO:0005737">
    <property type="term" value="C:cytoplasm"/>
    <property type="evidence" value="ECO:0007669"/>
    <property type="project" value="UniProtKB-SubCell"/>
</dbReference>
<dbReference type="GO" id="GO:0003746">
    <property type="term" value="F:translation elongation factor activity"/>
    <property type="evidence" value="ECO:0007669"/>
    <property type="project" value="UniProtKB-UniRule"/>
</dbReference>
<dbReference type="GO" id="GO:0043043">
    <property type="term" value="P:peptide biosynthetic process"/>
    <property type="evidence" value="ECO:0007669"/>
    <property type="project" value="InterPro"/>
</dbReference>
<dbReference type="CDD" id="cd04470">
    <property type="entry name" value="S1_EF-P_repeat_1"/>
    <property type="match status" value="1"/>
</dbReference>
<dbReference type="CDD" id="cd05794">
    <property type="entry name" value="S1_EF-P_repeat_2"/>
    <property type="match status" value="1"/>
</dbReference>
<dbReference type="FunFam" id="2.30.30.30:FF:000003">
    <property type="entry name" value="Elongation factor P"/>
    <property type="match status" value="1"/>
</dbReference>
<dbReference type="FunFam" id="2.40.50.140:FF:000004">
    <property type="entry name" value="Elongation factor P"/>
    <property type="match status" value="1"/>
</dbReference>
<dbReference type="FunFam" id="2.40.50.140:FF:000009">
    <property type="entry name" value="Elongation factor P"/>
    <property type="match status" value="1"/>
</dbReference>
<dbReference type="Gene3D" id="2.30.30.30">
    <property type="match status" value="1"/>
</dbReference>
<dbReference type="Gene3D" id="2.40.50.140">
    <property type="entry name" value="Nucleic acid-binding proteins"/>
    <property type="match status" value="2"/>
</dbReference>
<dbReference type="HAMAP" id="MF_00141">
    <property type="entry name" value="EF_P"/>
    <property type="match status" value="1"/>
</dbReference>
<dbReference type="InterPro" id="IPR015365">
    <property type="entry name" value="Elong-fact-P_C"/>
</dbReference>
<dbReference type="InterPro" id="IPR012340">
    <property type="entry name" value="NA-bd_OB-fold"/>
</dbReference>
<dbReference type="InterPro" id="IPR014722">
    <property type="entry name" value="Rib_uL2_dom2"/>
</dbReference>
<dbReference type="InterPro" id="IPR020599">
    <property type="entry name" value="Transl_elong_fac_P/YeiP"/>
</dbReference>
<dbReference type="InterPro" id="IPR013185">
    <property type="entry name" value="Transl_elong_KOW-like"/>
</dbReference>
<dbReference type="InterPro" id="IPR001059">
    <property type="entry name" value="Transl_elong_P/YeiP_cen"/>
</dbReference>
<dbReference type="InterPro" id="IPR011768">
    <property type="entry name" value="Transl_elongation_fac_P"/>
</dbReference>
<dbReference type="InterPro" id="IPR008991">
    <property type="entry name" value="Translation_prot_SH3-like_sf"/>
</dbReference>
<dbReference type="NCBIfam" id="TIGR00038">
    <property type="entry name" value="efp"/>
    <property type="match status" value="1"/>
</dbReference>
<dbReference type="NCBIfam" id="NF001810">
    <property type="entry name" value="PRK00529.1"/>
    <property type="match status" value="1"/>
</dbReference>
<dbReference type="PANTHER" id="PTHR30053">
    <property type="entry name" value="ELONGATION FACTOR P"/>
    <property type="match status" value="1"/>
</dbReference>
<dbReference type="PANTHER" id="PTHR30053:SF12">
    <property type="entry name" value="ELONGATION FACTOR P (EF-P) FAMILY PROTEIN"/>
    <property type="match status" value="1"/>
</dbReference>
<dbReference type="Pfam" id="PF01132">
    <property type="entry name" value="EFP"/>
    <property type="match status" value="1"/>
</dbReference>
<dbReference type="Pfam" id="PF08207">
    <property type="entry name" value="EFP_N"/>
    <property type="match status" value="1"/>
</dbReference>
<dbReference type="Pfam" id="PF09285">
    <property type="entry name" value="Elong-fact-P_C"/>
    <property type="match status" value="1"/>
</dbReference>
<dbReference type="PIRSF" id="PIRSF005901">
    <property type="entry name" value="EF-P"/>
    <property type="match status" value="1"/>
</dbReference>
<dbReference type="SMART" id="SM01185">
    <property type="entry name" value="EFP"/>
    <property type="match status" value="1"/>
</dbReference>
<dbReference type="SMART" id="SM00841">
    <property type="entry name" value="Elong-fact-P_C"/>
    <property type="match status" value="1"/>
</dbReference>
<dbReference type="SUPFAM" id="SSF50249">
    <property type="entry name" value="Nucleic acid-binding proteins"/>
    <property type="match status" value="2"/>
</dbReference>
<dbReference type="SUPFAM" id="SSF50104">
    <property type="entry name" value="Translation proteins SH3-like domain"/>
    <property type="match status" value="1"/>
</dbReference>
<accession>B4RL51</accession>
<keyword id="KW-0963">Cytoplasm</keyword>
<keyword id="KW-0251">Elongation factor</keyword>
<keyword id="KW-0648">Protein biosynthesis</keyword>
<evidence type="ECO:0000255" key="1">
    <source>
        <dbReference type="HAMAP-Rule" id="MF_00141"/>
    </source>
</evidence>
<feature type="chain" id="PRO_1000096181" description="Elongation factor P">
    <location>
        <begin position="1"/>
        <end position="186"/>
    </location>
</feature>
<name>EFP_NEIG2</name>
<proteinExistence type="inferred from homology"/>
<gene>
    <name evidence="1" type="primary">efp</name>
    <name type="ordered locus">NGK_0861</name>
</gene>